<keyword id="KW-0028">Amino-acid biosynthesis</keyword>
<keyword id="KW-0055">Arginine biosynthesis</keyword>
<keyword id="KW-0067">ATP-binding</keyword>
<keyword id="KW-0963">Cytoplasm</keyword>
<keyword id="KW-0418">Kinase</keyword>
<keyword id="KW-0547">Nucleotide-binding</keyword>
<keyword id="KW-0808">Transferase</keyword>
<feature type="chain" id="PRO_0000335616" description="Acetylglutamate kinase">
    <location>
        <begin position="1"/>
        <end position="293"/>
    </location>
</feature>
<feature type="binding site" evidence="1">
    <location>
        <begin position="68"/>
        <end position="69"/>
    </location>
    <ligand>
        <name>substrate</name>
    </ligand>
</feature>
<feature type="binding site" evidence="1">
    <location>
        <position position="90"/>
    </location>
    <ligand>
        <name>substrate</name>
    </ligand>
</feature>
<feature type="binding site" evidence="1">
    <location>
        <position position="189"/>
    </location>
    <ligand>
        <name>substrate</name>
    </ligand>
</feature>
<feature type="site" description="Transition state stabilizer" evidence="1">
    <location>
        <position position="33"/>
    </location>
</feature>
<feature type="site" description="Transition state stabilizer" evidence="1">
    <location>
        <position position="251"/>
    </location>
</feature>
<accession>A4XJN8</accession>
<organism>
    <name type="scientific">Caldicellulosiruptor saccharolyticus (strain ATCC 43494 / DSM 8903 / Tp8T 6331)</name>
    <dbReference type="NCBI Taxonomy" id="351627"/>
    <lineage>
        <taxon>Bacteria</taxon>
        <taxon>Bacillati</taxon>
        <taxon>Bacillota</taxon>
        <taxon>Bacillota incertae sedis</taxon>
        <taxon>Caldicellulosiruptorales</taxon>
        <taxon>Caldicellulosiruptoraceae</taxon>
        <taxon>Caldicellulosiruptor</taxon>
    </lineage>
</organism>
<dbReference type="EC" id="2.7.2.8" evidence="1"/>
<dbReference type="EMBL" id="CP000679">
    <property type="protein sequence ID" value="ABP67123.1"/>
    <property type="molecule type" value="Genomic_DNA"/>
</dbReference>
<dbReference type="RefSeq" id="WP_011917058.1">
    <property type="nucleotide sequence ID" value="NC_009437.1"/>
</dbReference>
<dbReference type="SMR" id="A4XJN8"/>
<dbReference type="STRING" id="351627.Csac_1530"/>
<dbReference type="KEGG" id="csc:Csac_1530"/>
<dbReference type="eggNOG" id="COG0548">
    <property type="taxonomic scope" value="Bacteria"/>
</dbReference>
<dbReference type="HOGENOM" id="CLU_053680_0_0_9"/>
<dbReference type="OrthoDB" id="9803155at2"/>
<dbReference type="UniPathway" id="UPA00068">
    <property type="reaction ID" value="UER00107"/>
</dbReference>
<dbReference type="Proteomes" id="UP000000256">
    <property type="component" value="Chromosome"/>
</dbReference>
<dbReference type="GO" id="GO:0005737">
    <property type="term" value="C:cytoplasm"/>
    <property type="evidence" value="ECO:0007669"/>
    <property type="project" value="UniProtKB-SubCell"/>
</dbReference>
<dbReference type="GO" id="GO:0003991">
    <property type="term" value="F:acetylglutamate kinase activity"/>
    <property type="evidence" value="ECO:0007669"/>
    <property type="project" value="UniProtKB-UniRule"/>
</dbReference>
<dbReference type="GO" id="GO:0005524">
    <property type="term" value="F:ATP binding"/>
    <property type="evidence" value="ECO:0007669"/>
    <property type="project" value="UniProtKB-UniRule"/>
</dbReference>
<dbReference type="GO" id="GO:0042450">
    <property type="term" value="P:arginine biosynthetic process via ornithine"/>
    <property type="evidence" value="ECO:0007669"/>
    <property type="project" value="UniProtKB-UniRule"/>
</dbReference>
<dbReference type="GO" id="GO:0006526">
    <property type="term" value="P:L-arginine biosynthetic process"/>
    <property type="evidence" value="ECO:0007669"/>
    <property type="project" value="UniProtKB-UniPathway"/>
</dbReference>
<dbReference type="CDD" id="cd04250">
    <property type="entry name" value="AAK_NAGK-C"/>
    <property type="match status" value="1"/>
</dbReference>
<dbReference type="FunFam" id="3.40.1160.10:FF:000004">
    <property type="entry name" value="Acetylglutamate kinase"/>
    <property type="match status" value="1"/>
</dbReference>
<dbReference type="Gene3D" id="3.40.1160.10">
    <property type="entry name" value="Acetylglutamate kinase-like"/>
    <property type="match status" value="1"/>
</dbReference>
<dbReference type="HAMAP" id="MF_00082">
    <property type="entry name" value="ArgB"/>
    <property type="match status" value="1"/>
</dbReference>
<dbReference type="InterPro" id="IPR036393">
    <property type="entry name" value="AceGlu_kinase-like_sf"/>
</dbReference>
<dbReference type="InterPro" id="IPR004662">
    <property type="entry name" value="AcgluKinase_fam"/>
</dbReference>
<dbReference type="InterPro" id="IPR037528">
    <property type="entry name" value="ArgB"/>
</dbReference>
<dbReference type="InterPro" id="IPR001048">
    <property type="entry name" value="Asp/Glu/Uridylate_kinase"/>
</dbReference>
<dbReference type="InterPro" id="IPR001057">
    <property type="entry name" value="Glu/AcGlu_kinase"/>
</dbReference>
<dbReference type="InterPro" id="IPR041727">
    <property type="entry name" value="NAGK-C"/>
</dbReference>
<dbReference type="NCBIfam" id="TIGR00761">
    <property type="entry name" value="argB"/>
    <property type="match status" value="1"/>
</dbReference>
<dbReference type="PANTHER" id="PTHR23342">
    <property type="entry name" value="N-ACETYLGLUTAMATE SYNTHASE"/>
    <property type="match status" value="1"/>
</dbReference>
<dbReference type="PANTHER" id="PTHR23342:SF0">
    <property type="entry name" value="N-ACETYLGLUTAMATE SYNTHASE, MITOCHONDRIAL"/>
    <property type="match status" value="1"/>
</dbReference>
<dbReference type="Pfam" id="PF00696">
    <property type="entry name" value="AA_kinase"/>
    <property type="match status" value="1"/>
</dbReference>
<dbReference type="PIRSF" id="PIRSF000728">
    <property type="entry name" value="NAGK"/>
    <property type="match status" value="1"/>
</dbReference>
<dbReference type="PRINTS" id="PR00474">
    <property type="entry name" value="GLU5KINASE"/>
</dbReference>
<dbReference type="SUPFAM" id="SSF53633">
    <property type="entry name" value="Carbamate kinase-like"/>
    <property type="match status" value="1"/>
</dbReference>
<comment type="function">
    <text evidence="1">Catalyzes the ATP-dependent phosphorylation of N-acetyl-L-glutamate.</text>
</comment>
<comment type="catalytic activity">
    <reaction evidence="1">
        <text>N-acetyl-L-glutamate + ATP = N-acetyl-L-glutamyl 5-phosphate + ADP</text>
        <dbReference type="Rhea" id="RHEA:14629"/>
        <dbReference type="ChEBI" id="CHEBI:30616"/>
        <dbReference type="ChEBI" id="CHEBI:44337"/>
        <dbReference type="ChEBI" id="CHEBI:57936"/>
        <dbReference type="ChEBI" id="CHEBI:456216"/>
        <dbReference type="EC" id="2.7.2.8"/>
    </reaction>
</comment>
<comment type="pathway">
    <text evidence="1">Amino-acid biosynthesis; L-arginine biosynthesis; N(2)-acetyl-L-ornithine from L-glutamate: step 2/4.</text>
</comment>
<comment type="subcellular location">
    <subcellularLocation>
        <location evidence="1">Cytoplasm</location>
    </subcellularLocation>
</comment>
<comment type="similarity">
    <text evidence="1">Belongs to the acetylglutamate kinase family. ArgB subfamily.</text>
</comment>
<protein>
    <recommendedName>
        <fullName evidence="1">Acetylglutamate kinase</fullName>
        <ecNumber evidence="1">2.7.2.8</ecNumber>
    </recommendedName>
    <alternativeName>
        <fullName evidence="1">N-acetyl-L-glutamate 5-phosphotransferase</fullName>
    </alternativeName>
    <alternativeName>
        <fullName evidence="1">NAG kinase</fullName>
        <shortName evidence="1">NAGK</shortName>
    </alternativeName>
</protein>
<reference key="1">
    <citation type="submission" date="2007-04" db="EMBL/GenBank/DDBJ databases">
        <title>Genome sequence of the thermophilic hydrogen-producing bacterium Caldicellulosiruptor saccharolyticus DSM 8903.</title>
        <authorList>
            <person name="Copeland A."/>
            <person name="Lucas S."/>
            <person name="Lapidus A."/>
            <person name="Barry K."/>
            <person name="Detter J.C."/>
            <person name="Glavina del Rio T."/>
            <person name="Hammon N."/>
            <person name="Israni S."/>
            <person name="Dalin E."/>
            <person name="Tice H."/>
            <person name="Pitluck S."/>
            <person name="Kiss H."/>
            <person name="Brettin T."/>
            <person name="Bruce D."/>
            <person name="Han C."/>
            <person name="Schmutz J."/>
            <person name="Larimer F."/>
            <person name="Land M."/>
            <person name="Hauser L."/>
            <person name="Kyrpides N."/>
            <person name="Lykidis A."/>
            <person name="van de Werken H.J.G."/>
            <person name="Verhaart M.R.A."/>
            <person name="VanFossen A.L."/>
            <person name="Lewis D.L."/>
            <person name="Nichols J.D."/>
            <person name="Goorissen H.P."/>
            <person name="van Niel E.W.J."/>
            <person name="Stams F.J.M."/>
            <person name="Willquist K.U."/>
            <person name="Ward D.E."/>
            <person name="van der Oost J."/>
            <person name="Kelly R.M."/>
            <person name="Kengen S.M.W."/>
            <person name="Richardson P."/>
        </authorList>
    </citation>
    <scope>NUCLEOTIDE SEQUENCE [LARGE SCALE GENOMIC DNA]</scope>
    <source>
        <strain>ATCC 43494 / DSM 8903 / Tp8T 6331</strain>
    </source>
</reference>
<evidence type="ECO:0000255" key="1">
    <source>
        <dbReference type="HAMAP-Rule" id="MF_00082"/>
    </source>
</evidence>
<proteinExistence type="inferred from homology"/>
<gene>
    <name evidence="1" type="primary">argB</name>
    <name type="ordered locus">Csac_1530</name>
</gene>
<sequence length="293" mass="32014">MYEEMDKLIEKASILIEALPYIQKLYGKTVVIKYGGNAMINDKLKNWVMEDITLLKYIGVNPIVVHGGGPEINSVLKKLNVESQFVNGLRVTDMQTMEVAQMVLVGKTNKELVSMLNQKGGKAIGICGIDGNLIQARKHYEIVNGEKVDLGYVGEVVSINAKVLEMLAKDEYIPVVAPIGVGEDGTSYNINADTVAAEIAKAIKAEKLMFMTDVEGLKYDKNSSEIISAISADEVLKMIDEGKIDGGMIPKVLGCIDALKHGVNRTHILDGRIPHCILLEIFTDKGIGTMIHL</sequence>
<name>ARGB_CALS8</name>